<sequence length="108" mass="11748">MGVTVETIQPGDGKNFPKKGDTVTMHYTGTLQNGSVFDSSVRRNEPFVTQIGVGRVIKGWDEGVLQLSLGQKANLICTPDYAYGPRGFPPVIPPNATLNFEVELLKIN</sequence>
<reference key="1">
    <citation type="journal article" date="2009" name="PLoS Genet.">
        <title>Genomic analysis of the basal lineage fungus Rhizopus oryzae reveals a whole-genome duplication.</title>
        <authorList>
            <person name="Ma L.-J."/>
            <person name="Ibrahim A.S."/>
            <person name="Skory C."/>
            <person name="Grabherr M.G."/>
            <person name="Burger G."/>
            <person name="Butler M."/>
            <person name="Elias M."/>
            <person name="Idnurm A."/>
            <person name="Lang B.F."/>
            <person name="Sone T."/>
            <person name="Abe A."/>
            <person name="Calvo S.E."/>
            <person name="Corrochano L.M."/>
            <person name="Engels R."/>
            <person name="Fu J."/>
            <person name="Hansberg W."/>
            <person name="Kim J.-M."/>
            <person name="Kodira C.D."/>
            <person name="Koehrsen M.J."/>
            <person name="Liu B."/>
            <person name="Miranda-Saavedra D."/>
            <person name="O'Leary S."/>
            <person name="Ortiz-Castellanos L."/>
            <person name="Poulter R."/>
            <person name="Rodriguez-Romero J."/>
            <person name="Ruiz-Herrera J."/>
            <person name="Shen Y.-Q."/>
            <person name="Zeng Q."/>
            <person name="Galagan J."/>
            <person name="Birren B.W."/>
            <person name="Cuomo C.A."/>
            <person name="Wickes B.L."/>
        </authorList>
    </citation>
    <scope>NUCLEOTIDE SEQUENCE [LARGE SCALE GENOMIC DNA]</scope>
    <source>
        <strain>RA 99-880 / ATCC MYA-4621 / FGSC 9543 / NRRL 43880</strain>
    </source>
</reference>
<gene>
    <name type="primary">FKBP1</name>
    <name type="synonym">fpr1</name>
    <name type="ORF">RO3G_16831</name>
</gene>
<feature type="chain" id="PRO_0000244726" description="FK506-binding protein 1">
    <location>
        <begin position="1"/>
        <end position="108"/>
    </location>
</feature>
<feature type="domain" description="PPIase FKBP-type" evidence="2">
    <location>
        <begin position="20"/>
        <end position="108"/>
    </location>
</feature>
<feature type="region of interest" description="Disordered" evidence="3">
    <location>
        <begin position="1"/>
        <end position="20"/>
    </location>
</feature>
<comment type="function">
    <text evidence="1">PPIases accelerate the folding of proteins. It catalyzes the cis-trans isomerization of proline imidic peptide bonds in oligopeptides (By similarity).</text>
</comment>
<comment type="catalytic activity">
    <reaction>
        <text>[protein]-peptidylproline (omega=180) = [protein]-peptidylproline (omega=0)</text>
        <dbReference type="Rhea" id="RHEA:16237"/>
        <dbReference type="Rhea" id="RHEA-COMP:10747"/>
        <dbReference type="Rhea" id="RHEA-COMP:10748"/>
        <dbReference type="ChEBI" id="CHEBI:83833"/>
        <dbReference type="ChEBI" id="CHEBI:83834"/>
        <dbReference type="EC" id="5.2.1.8"/>
    </reaction>
</comment>
<comment type="activity regulation">
    <text evidence="1">Inhibited by both FK506 and rapamycin.</text>
</comment>
<comment type="subcellular location">
    <subcellularLocation>
        <location evidence="1">Cytoplasm</location>
    </subcellularLocation>
</comment>
<comment type="similarity">
    <text evidence="4">Belongs to the FKBP-type PPIase family. FKBP1 subfamily.</text>
</comment>
<protein>
    <recommendedName>
        <fullName>FK506-binding protein 1</fullName>
        <shortName>FKBP</shortName>
        <ecNumber>5.2.1.8</ecNumber>
    </recommendedName>
    <alternativeName>
        <fullName>Peptidyl-prolyl cis-trans isomerase</fullName>
        <shortName>PPIase</shortName>
    </alternativeName>
    <alternativeName>
        <fullName>Rapamycin-binding protein</fullName>
    </alternativeName>
</protein>
<dbReference type="EC" id="5.2.1.8"/>
<dbReference type="EMBL" id="CH476754">
    <property type="protein sequence ID" value="EIE92120.1"/>
    <property type="molecule type" value="Genomic_DNA"/>
</dbReference>
<dbReference type="SMR" id="P0C1J3"/>
<dbReference type="FunCoup" id="P0C1J3">
    <property type="interactions" value="216"/>
</dbReference>
<dbReference type="STRING" id="246409.P0C1J3"/>
<dbReference type="VEuPathDB" id="FungiDB:RO3G_16831"/>
<dbReference type="eggNOG" id="KOG0544">
    <property type="taxonomic scope" value="Eukaryota"/>
</dbReference>
<dbReference type="InParanoid" id="P0C1J3"/>
<dbReference type="OMA" id="EQFDASW"/>
<dbReference type="OrthoDB" id="1408at4827"/>
<dbReference type="Proteomes" id="UP000009138">
    <property type="component" value="Unassembled WGS sequence"/>
</dbReference>
<dbReference type="GO" id="GO:0005737">
    <property type="term" value="C:cytoplasm"/>
    <property type="evidence" value="ECO:0007669"/>
    <property type="project" value="UniProtKB-SubCell"/>
</dbReference>
<dbReference type="GO" id="GO:0003755">
    <property type="term" value="F:peptidyl-prolyl cis-trans isomerase activity"/>
    <property type="evidence" value="ECO:0007669"/>
    <property type="project" value="UniProtKB-KW"/>
</dbReference>
<dbReference type="FunFam" id="3.10.50.40:FF:000025">
    <property type="entry name" value="Peptidylprolyl isomerase"/>
    <property type="match status" value="1"/>
</dbReference>
<dbReference type="Gene3D" id="3.10.50.40">
    <property type="match status" value="1"/>
</dbReference>
<dbReference type="InterPro" id="IPR050689">
    <property type="entry name" value="FKBP-type_PPIase"/>
</dbReference>
<dbReference type="InterPro" id="IPR046357">
    <property type="entry name" value="PPIase_dom_sf"/>
</dbReference>
<dbReference type="InterPro" id="IPR001179">
    <property type="entry name" value="PPIase_FKBP_dom"/>
</dbReference>
<dbReference type="PANTHER" id="PTHR10516:SF443">
    <property type="entry name" value="FK506-BINDING PROTEIN 59-RELATED"/>
    <property type="match status" value="1"/>
</dbReference>
<dbReference type="PANTHER" id="PTHR10516">
    <property type="entry name" value="PEPTIDYL-PROLYL CIS-TRANS ISOMERASE"/>
    <property type="match status" value="1"/>
</dbReference>
<dbReference type="Pfam" id="PF00254">
    <property type="entry name" value="FKBP_C"/>
    <property type="match status" value="1"/>
</dbReference>
<dbReference type="SUPFAM" id="SSF54534">
    <property type="entry name" value="FKBP-like"/>
    <property type="match status" value="1"/>
</dbReference>
<dbReference type="PROSITE" id="PS50059">
    <property type="entry name" value="FKBP_PPIASE"/>
    <property type="match status" value="1"/>
</dbReference>
<proteinExistence type="inferred from homology"/>
<accession>P0C1J3</accession>
<accession>I1CUJ0</accession>
<organism>
    <name type="scientific">Rhizopus delemar (strain RA 99-880 / ATCC MYA-4621 / FGSC 9543 / NRRL 43880)</name>
    <name type="common">Mucormycosis agent</name>
    <name type="synonym">Rhizopus arrhizus var. delemar</name>
    <dbReference type="NCBI Taxonomy" id="246409"/>
    <lineage>
        <taxon>Eukaryota</taxon>
        <taxon>Fungi</taxon>
        <taxon>Fungi incertae sedis</taxon>
        <taxon>Mucoromycota</taxon>
        <taxon>Mucoromycotina</taxon>
        <taxon>Mucoromycetes</taxon>
        <taxon>Mucorales</taxon>
        <taxon>Mucorineae</taxon>
        <taxon>Rhizopodaceae</taxon>
        <taxon>Rhizopus</taxon>
    </lineage>
</organism>
<keyword id="KW-0963">Cytoplasm</keyword>
<keyword id="KW-0413">Isomerase</keyword>
<keyword id="KW-1185">Reference proteome</keyword>
<keyword id="KW-0697">Rotamase</keyword>
<name>FKBP1_RHIO9</name>
<evidence type="ECO:0000250" key="1"/>
<evidence type="ECO:0000255" key="2">
    <source>
        <dbReference type="PROSITE-ProRule" id="PRU00277"/>
    </source>
</evidence>
<evidence type="ECO:0000256" key="3">
    <source>
        <dbReference type="SAM" id="MobiDB-lite"/>
    </source>
</evidence>
<evidence type="ECO:0000305" key="4"/>